<reference key="1">
    <citation type="journal article" date="2002" name="Nature">
        <title>The genome sequence of Schizosaccharomyces pombe.</title>
        <authorList>
            <person name="Wood V."/>
            <person name="Gwilliam R."/>
            <person name="Rajandream M.A."/>
            <person name="Lyne M.H."/>
            <person name="Lyne R."/>
            <person name="Stewart A."/>
            <person name="Sgouros J.G."/>
            <person name="Peat N."/>
            <person name="Hayles J."/>
            <person name="Baker S.G."/>
            <person name="Basham D."/>
            <person name="Bowman S."/>
            <person name="Brooks K."/>
            <person name="Brown D."/>
            <person name="Brown S."/>
            <person name="Chillingworth T."/>
            <person name="Churcher C.M."/>
            <person name="Collins M."/>
            <person name="Connor R."/>
            <person name="Cronin A."/>
            <person name="Davis P."/>
            <person name="Feltwell T."/>
            <person name="Fraser A."/>
            <person name="Gentles S."/>
            <person name="Goble A."/>
            <person name="Hamlin N."/>
            <person name="Harris D.E."/>
            <person name="Hidalgo J."/>
            <person name="Hodgson G."/>
            <person name="Holroyd S."/>
            <person name="Hornsby T."/>
            <person name="Howarth S."/>
            <person name="Huckle E.J."/>
            <person name="Hunt S."/>
            <person name="Jagels K."/>
            <person name="James K.D."/>
            <person name="Jones L."/>
            <person name="Jones M."/>
            <person name="Leather S."/>
            <person name="McDonald S."/>
            <person name="McLean J."/>
            <person name="Mooney P."/>
            <person name="Moule S."/>
            <person name="Mungall K.L."/>
            <person name="Murphy L.D."/>
            <person name="Niblett D."/>
            <person name="Odell C."/>
            <person name="Oliver K."/>
            <person name="O'Neil S."/>
            <person name="Pearson D."/>
            <person name="Quail M.A."/>
            <person name="Rabbinowitsch E."/>
            <person name="Rutherford K.M."/>
            <person name="Rutter S."/>
            <person name="Saunders D."/>
            <person name="Seeger K."/>
            <person name="Sharp S."/>
            <person name="Skelton J."/>
            <person name="Simmonds M.N."/>
            <person name="Squares R."/>
            <person name="Squares S."/>
            <person name="Stevens K."/>
            <person name="Taylor K."/>
            <person name="Taylor R.G."/>
            <person name="Tivey A."/>
            <person name="Walsh S.V."/>
            <person name="Warren T."/>
            <person name="Whitehead S."/>
            <person name="Woodward J.R."/>
            <person name="Volckaert G."/>
            <person name="Aert R."/>
            <person name="Robben J."/>
            <person name="Grymonprez B."/>
            <person name="Weltjens I."/>
            <person name="Vanstreels E."/>
            <person name="Rieger M."/>
            <person name="Schaefer M."/>
            <person name="Mueller-Auer S."/>
            <person name="Gabel C."/>
            <person name="Fuchs M."/>
            <person name="Duesterhoeft A."/>
            <person name="Fritzc C."/>
            <person name="Holzer E."/>
            <person name="Moestl D."/>
            <person name="Hilbert H."/>
            <person name="Borzym K."/>
            <person name="Langer I."/>
            <person name="Beck A."/>
            <person name="Lehrach H."/>
            <person name="Reinhardt R."/>
            <person name="Pohl T.M."/>
            <person name="Eger P."/>
            <person name="Zimmermann W."/>
            <person name="Wedler H."/>
            <person name="Wambutt R."/>
            <person name="Purnelle B."/>
            <person name="Goffeau A."/>
            <person name="Cadieu E."/>
            <person name="Dreano S."/>
            <person name="Gloux S."/>
            <person name="Lelaure V."/>
            <person name="Mottier S."/>
            <person name="Galibert F."/>
            <person name="Aves S.J."/>
            <person name="Xiang Z."/>
            <person name="Hunt C."/>
            <person name="Moore K."/>
            <person name="Hurst S.M."/>
            <person name="Lucas M."/>
            <person name="Rochet M."/>
            <person name="Gaillardin C."/>
            <person name="Tallada V.A."/>
            <person name="Garzon A."/>
            <person name="Thode G."/>
            <person name="Daga R.R."/>
            <person name="Cruzado L."/>
            <person name="Jimenez J."/>
            <person name="Sanchez M."/>
            <person name="del Rey F."/>
            <person name="Benito J."/>
            <person name="Dominguez A."/>
            <person name="Revuelta J.L."/>
            <person name="Moreno S."/>
            <person name="Armstrong J."/>
            <person name="Forsburg S.L."/>
            <person name="Cerutti L."/>
            <person name="Lowe T."/>
            <person name="McCombie W.R."/>
            <person name="Paulsen I."/>
            <person name="Potashkin J."/>
            <person name="Shpakovski G.V."/>
            <person name="Ussery D."/>
            <person name="Barrell B.G."/>
            <person name="Nurse P."/>
        </authorList>
    </citation>
    <scope>NUCLEOTIDE SEQUENCE [LARGE SCALE GENOMIC DNA]</scope>
    <source>
        <strain>972 / ATCC 24843</strain>
    </source>
</reference>
<reference key="2">
    <citation type="journal article" date="2006" name="FEBS Lett.">
        <title>The fission yeast Map4 protein is a novel adhesin required for mating.</title>
        <authorList>
            <person name="Sharifmoghadam M.R."/>
            <person name="Bustos-Sanmamed P."/>
            <person name="Valdivieso M.-H."/>
        </authorList>
    </citation>
    <scope>NUCLEOTIDE SEQUENCE [GENOMIC DNA]</scope>
    <scope>FUNCTION</scope>
    <scope>SUBCELLULAR LOCATION</scope>
</reference>
<reference key="3">
    <citation type="journal article" date="2008" name="Fungal Genet. Biol.">
        <title>Molecular phylogenetics of ascomycotal adhesins--a novel family of putative cell-surface adhesive proteins in fission yeasts.</title>
        <authorList>
            <person name="Linder T."/>
            <person name="Gustafsson C.M."/>
        </authorList>
    </citation>
    <scope>DOMAIN</scope>
    <scope>REPEATS</scope>
</reference>
<keyword id="KW-0184">Conjugation</keyword>
<keyword id="KW-0325">Glycoprotein</keyword>
<keyword id="KW-1185">Reference proteome</keyword>
<keyword id="KW-0677">Repeat</keyword>
<keyword id="KW-0732">Signal</keyword>
<evidence type="ECO:0000255" key="1"/>
<evidence type="ECO:0000255" key="2">
    <source>
        <dbReference type="PROSITE-ProRule" id="PRU01169"/>
    </source>
</evidence>
<evidence type="ECO:0000256" key="3">
    <source>
        <dbReference type="SAM" id="MobiDB-lite"/>
    </source>
</evidence>
<evidence type="ECO:0000269" key="4">
    <source>
    </source>
</evidence>
<evidence type="ECO:0000303" key="5">
    <source>
    </source>
</evidence>
<evidence type="ECO:0000305" key="6"/>
<evidence type="ECO:0000305" key="7">
    <source>
    </source>
</evidence>
<evidence type="ECO:0000312" key="8">
    <source>
        <dbReference type="PomBase" id="SPBC21D10.06c"/>
    </source>
</evidence>
<comment type="function">
    <text evidence="4">P cell-type specific protein which involved in agglutination during conjugation.</text>
</comment>
<comment type="subcellular location">
    <subcellularLocation>
        <location evidence="4">Cell surface</location>
    </subcellularLocation>
    <text evidence="4">Localizes at the mating projection tip.</text>
</comment>
<comment type="miscellaneous">
    <text evidence="7">According to PubMed:16857197 the number of the intragenic tandem repeats for map4 is 9 rather than the 5 annotated in the reference sequence, producing a protein of 1092 amino acids.</text>
</comment>
<comment type="similarity">
    <text evidence="2">Belongs to the mam3/map4 family.</text>
</comment>
<proteinExistence type="inferred from homology"/>
<dbReference type="EMBL" id="CU329671">
    <property type="protein sequence ID" value="CAA20762.1"/>
    <property type="molecule type" value="Genomic_DNA"/>
</dbReference>
<dbReference type="PIR" id="T11678">
    <property type="entry name" value="T11678"/>
</dbReference>
<dbReference type="RefSeq" id="NP_596007.1">
    <property type="nucleotide sequence ID" value="NM_001021915.2"/>
</dbReference>
<dbReference type="STRING" id="284812.O74346"/>
<dbReference type="GlyCosmos" id="O74346">
    <property type="glycosylation" value="12 sites, No reported glycans"/>
</dbReference>
<dbReference type="PaxDb" id="4896-SPBC21D10.06c.1"/>
<dbReference type="EnsemblFungi" id="SPBC21D10.06c.1">
    <property type="protein sequence ID" value="SPBC21D10.06c.1:pep"/>
    <property type="gene ID" value="SPBC21D10.06c"/>
</dbReference>
<dbReference type="GeneID" id="2540608"/>
<dbReference type="KEGG" id="spo:2540608"/>
<dbReference type="PomBase" id="SPBC21D10.06c">
    <property type="gene designation" value="map4"/>
</dbReference>
<dbReference type="VEuPathDB" id="FungiDB:SPBC21D10.06c"/>
<dbReference type="HOGENOM" id="CLU_310385_0_0_1"/>
<dbReference type="InParanoid" id="O74346"/>
<dbReference type="OMA" id="IVESSNW"/>
<dbReference type="PRO" id="PR:O74346"/>
<dbReference type="Proteomes" id="UP000002485">
    <property type="component" value="Chromosome II"/>
</dbReference>
<dbReference type="GO" id="GO:0070263">
    <property type="term" value="C:external side of fungal-type cell wall"/>
    <property type="evidence" value="ECO:0000314"/>
    <property type="project" value="PomBase"/>
</dbReference>
<dbReference type="GO" id="GO:0043332">
    <property type="term" value="C:mating projection tip"/>
    <property type="evidence" value="ECO:0000314"/>
    <property type="project" value="PomBase"/>
</dbReference>
<dbReference type="GO" id="GO:0000747">
    <property type="term" value="P:conjugation with cellular fusion"/>
    <property type="evidence" value="ECO:0000315"/>
    <property type="project" value="PomBase"/>
</dbReference>
<dbReference type="GO" id="GO:0000128">
    <property type="term" value="P:flocculation"/>
    <property type="evidence" value="ECO:0000318"/>
    <property type="project" value="GO_Central"/>
</dbReference>
<dbReference type="InterPro" id="IPR021746">
    <property type="entry name" value="DIPSY"/>
</dbReference>
<dbReference type="InterPro" id="IPR051905">
    <property type="entry name" value="S_pombe_Mam3/Map4"/>
</dbReference>
<dbReference type="PANTHER" id="PTHR31492">
    <property type="entry name" value="M CELL-TYPE AGGLUTINATION PROTEIN MAM3-RELATED"/>
    <property type="match status" value="1"/>
</dbReference>
<dbReference type="PANTHER" id="PTHR31492:SF14">
    <property type="entry name" value="M CELL-TYPE AGGLUTINATION PROTEIN MAM3-RELATED"/>
    <property type="match status" value="1"/>
</dbReference>
<dbReference type="Pfam" id="PF11763">
    <property type="entry name" value="DIPSY"/>
    <property type="match status" value="1"/>
</dbReference>
<dbReference type="PROSITE" id="PS51825">
    <property type="entry name" value="DIPSY"/>
    <property type="match status" value="1"/>
</dbReference>
<sequence>MNSYAILLSLFFSFERLLTLANANSLYSPFNNSSFVDSDTSFSDLSRNGLLSLLDSNTTSASVQTIAISQTDNAASCIPSASLLSSSVVLYSAKETVTVSSYWSLVSTSVTGTVYVPYTSSVACFPYATSDAPNPIPRGDSATSTSIAPTYSASDSSATTITSSSPSTSIIGTGSTDTSVSSTLTYHTPIASPTTSSNSDNEYTVDVITSSSLSSFVITNVDSTTTSVINYIGASTLESSSLTNTVSPTESTFYETKSSTSSVPTQTIDSSSFTSSTPVSLTSSSTSSSGSSQDSTTIDSTPSTIATSTLQPTTSSPITTSAPSLSSALPTTYPSSLSTEVEVEYFTKTITDTSSIVTYSTGVETLYETETITSSEISSIIYNFSTPISGSSFPDGFKPINPTSFPSLTSSTKKIPSTTLPTSSKMITTTTPSVSNNTQSSFLIISTFTSSYEHSEPFKVSSVPLTSNNFSSISHSSASSLPITPSSYLSNTTLHSSVQSSQSSQFTVSVPSSTQSYSTSSNFTTPITISTSLSSFPTTIVSSSFQYSSLSSNVTTTNAQSSSLSSSNSSALTHISSSIVSSGSSSALSSSTIVSSINSSSSVFISSVSSSLQYSSSYVTETTTSGSVGFTTTIATPVGSTAGTVVVDIPTPSWVTETVTSGSVGFTTTIATPVGSTAGTVLVDIPTPSWVTETVTSGSVEFTTTIATPVGTTAGTVVVDIPTPSWVTETVTSGSVGFTTTIATPIGTTAGTVLVDIPTPSWVTETVTSGSVGFTTTIATPVGTTAGTVLIDVPTPTASSSPFPSCNTQCTNENSFRIQVINDDIYPSYVHLDSNNYAIAAARGDSDGENVFIYDSDIKRIVSCCGVKPIYRLDQDDTEGYSFEIYKDNDGQLQFKYPLNDALYPMELLTLTDGRIGITTNLTLYKPYYLNNVENERAANVVLRALEY</sequence>
<protein>
    <recommendedName>
        <fullName evidence="6">P cell-type agglutination protein map4</fullName>
    </recommendedName>
    <alternativeName>
        <fullName evidence="5">Adhesin map4</fullName>
    </alternativeName>
</protein>
<name>MAP4_SCHPO</name>
<organism>
    <name type="scientific">Schizosaccharomyces pombe (strain 972 / ATCC 24843)</name>
    <name type="common">Fission yeast</name>
    <dbReference type="NCBI Taxonomy" id="284812"/>
    <lineage>
        <taxon>Eukaryota</taxon>
        <taxon>Fungi</taxon>
        <taxon>Dikarya</taxon>
        <taxon>Ascomycota</taxon>
        <taxon>Taphrinomycotina</taxon>
        <taxon>Schizosaccharomycetes</taxon>
        <taxon>Schizosaccharomycetales</taxon>
        <taxon>Schizosaccharomycetaceae</taxon>
        <taxon>Schizosaccharomyces</taxon>
    </lineage>
</organism>
<gene>
    <name evidence="5" type="primary">map4</name>
    <name evidence="8" type="ORF">SPBC21D10.06c</name>
</gene>
<feature type="signal peptide" evidence="1">
    <location>
        <begin position="1"/>
        <end position="23"/>
    </location>
</feature>
<feature type="chain" id="PRO_0000353808" description="P cell-type agglutination protein map4">
    <location>
        <begin position="24"/>
        <end position="948"/>
    </location>
</feature>
<feature type="repeat" description="1" evidence="7">
    <location>
        <begin position="617"/>
        <end position="652"/>
    </location>
</feature>
<feature type="repeat" description="2" evidence="7">
    <location>
        <begin position="653"/>
        <end position="688"/>
    </location>
</feature>
<feature type="repeat" description="3" evidence="7">
    <location>
        <begin position="689"/>
        <end position="724"/>
    </location>
</feature>
<feature type="repeat" description="4" evidence="7">
    <location>
        <begin position="725"/>
        <end position="760"/>
    </location>
</feature>
<feature type="repeat" description="5" evidence="7">
    <location>
        <begin position="761"/>
        <end position="796"/>
    </location>
</feature>
<feature type="domain" description="DIPSY" evidence="2">
    <location>
        <begin position="796"/>
        <end position="948"/>
    </location>
</feature>
<feature type="region of interest" description="Disordered" evidence="3">
    <location>
        <begin position="136"/>
        <end position="174"/>
    </location>
</feature>
<feature type="region of interest" description="Disordered" evidence="3">
    <location>
        <begin position="253"/>
        <end position="333"/>
    </location>
</feature>
<feature type="region of interest" description="Disordered" evidence="3">
    <location>
        <begin position="408"/>
        <end position="432"/>
    </location>
</feature>
<feature type="region of interest" description="5 X 36 AA approximate tandem repeats" evidence="7">
    <location>
        <begin position="617"/>
        <end position="796"/>
    </location>
</feature>
<feature type="compositionally biased region" description="Low complexity" evidence="3">
    <location>
        <begin position="149"/>
        <end position="174"/>
    </location>
</feature>
<feature type="compositionally biased region" description="Polar residues" evidence="3">
    <location>
        <begin position="253"/>
        <end position="264"/>
    </location>
</feature>
<feature type="compositionally biased region" description="Low complexity" evidence="3">
    <location>
        <begin position="265"/>
        <end position="332"/>
    </location>
</feature>
<feature type="glycosylation site" description="N-linked (GlcNAc...) asparagine" evidence="1">
    <location>
        <position position="31"/>
    </location>
</feature>
<feature type="glycosylation site" description="N-linked (GlcNAc...) asparagine" evidence="1">
    <location>
        <position position="32"/>
    </location>
</feature>
<feature type="glycosylation site" description="N-linked (GlcNAc...) asparagine" evidence="1">
    <location>
        <position position="57"/>
    </location>
</feature>
<feature type="glycosylation site" description="N-linked (GlcNAc...) asparagine" evidence="1">
    <location>
        <position position="383"/>
    </location>
</feature>
<feature type="glycosylation site" description="N-linked (GlcNAc...) asparagine" evidence="1">
    <location>
        <position position="436"/>
    </location>
</feature>
<feature type="glycosylation site" description="N-linked (GlcNAc...) asparagine" evidence="1">
    <location>
        <position position="469"/>
    </location>
</feature>
<feature type="glycosylation site" description="N-linked (GlcNAc...) asparagine" evidence="1">
    <location>
        <position position="491"/>
    </location>
</feature>
<feature type="glycosylation site" description="N-linked (GlcNAc...) asparagine" evidence="1">
    <location>
        <position position="522"/>
    </location>
</feature>
<feature type="glycosylation site" description="N-linked (GlcNAc...) asparagine" evidence="1">
    <location>
        <position position="553"/>
    </location>
</feature>
<feature type="glycosylation site" description="N-linked (GlcNAc...) asparagine" evidence="1">
    <location>
        <position position="568"/>
    </location>
</feature>
<feature type="glycosylation site" description="N-linked (GlcNAc...) asparagine" evidence="1">
    <location>
        <position position="598"/>
    </location>
</feature>
<feature type="glycosylation site" description="N-linked (GlcNAc...) asparagine" evidence="1">
    <location>
        <position position="921"/>
    </location>
</feature>
<feature type="sequence conflict" description="In Ref. 2; no nucleotide entry." evidence="6" ref="2">
    <original>D</original>
    <variation>DVPTPSWVTETVTSGSVEFTTTIATPVGTTAGTVVVDIPTPSWVTETVTSGSVGFTTTIATPIGTTAGTVLVDIPTPSWVTETVTSGSVGFTTTITTPVGSTAGTVLVDIPTPSWVTETVTSGSVEFTTTIATPVGSTAGTVLVD</variation>
    <location>
        <position position="684"/>
    </location>
</feature>
<accession>O74346</accession>